<evidence type="ECO:0000250" key="1"/>
<evidence type="ECO:0000255" key="2">
    <source>
        <dbReference type="PROSITE-ProRule" id="PRU00176"/>
    </source>
</evidence>
<evidence type="ECO:0000255" key="3">
    <source>
        <dbReference type="PROSITE-ProRule" id="PRU00641"/>
    </source>
</evidence>
<evidence type="ECO:0000256" key="4">
    <source>
        <dbReference type="SAM" id="MobiDB-lite"/>
    </source>
</evidence>
<evidence type="ECO:0000305" key="5"/>
<keyword id="KW-0963">Cytoplasm</keyword>
<keyword id="KW-0507">mRNA processing</keyword>
<keyword id="KW-0509">mRNA transport</keyword>
<keyword id="KW-0539">Nucleus</keyword>
<keyword id="KW-1185">Reference proteome</keyword>
<keyword id="KW-0677">Repeat</keyword>
<keyword id="KW-0694">RNA-binding</keyword>
<keyword id="KW-0810">Translation regulation</keyword>
<keyword id="KW-0813">Transport</keyword>
<name>PABP_NEOFI</name>
<sequence length="751" mass="81197">MSAEVSTTPAADNTVNGTPEATNPAATSAPEVTAVESASPSATPSANQPHSASLYVGELDPSVTEAMLYELFSSIGQVASIRVCRDAVTRRSLGYAYVNYNNTADGERALEDLNYTLIKGKPCRIMWSQRDPALRKTGQGNVFIKNLDAAIDNKALHDTFAAFGNILSCKVAQDEFGNSKGYGFVHYETAEAANNAIKHVNGMLLNDKKVFVGHHISKKDRQSKFEEMKANFTNVYIKNIDQEVTDEEFRKMFEKFGEITSATLSRDQEGKSRGFGFVNFSTHDSAQAAVDEMNDKEIKGQKLYVGRAQKKHEREEELRKQYEAARLEKASKYQGVNLYVKNLTDDVDDEKLRELFSPFGTITSAKVMRDTVTAGETSESEKEKESNKENEKEGEEKTEEKPKESEEEAKKTEKKILGKSKGFGFVCFSSPDEASKAVTEMNQRMVNGKPLYVALAQRKDVRRSQLEASIQARNTIRQQQAAAAAGMPQPYMQPAVFYGPGQQGFIPAGQRGGMPFAPQPGMVMGIPGGRPGQYPGPFPGQQGGRGMGPNQQIPPNFQGIPMGAMQGPGGIPNGMGYPQMAQVQFGRGAGGRGQVPGMPMGQGMRGPGYGQGRGGAPVQGGPRPQGGRGQPAAAPPAAGREEVPATGGLTAQTLNAVPPPQQKQMLGEALYPKIQAQQPELAGKITGMLLEMDNTELLGLLEDEEALRAKVDEALSVYDEYMKNKGEGEAPAEPAKPKEDAAETATEENKS</sequence>
<organism>
    <name type="scientific">Neosartorya fischeri (strain ATCC 1020 / DSM 3700 / CBS 544.65 / FGSC A1164 / JCM 1740 / NRRL 181 / WB 181)</name>
    <name type="common">Aspergillus fischerianus</name>
    <dbReference type="NCBI Taxonomy" id="331117"/>
    <lineage>
        <taxon>Eukaryota</taxon>
        <taxon>Fungi</taxon>
        <taxon>Dikarya</taxon>
        <taxon>Ascomycota</taxon>
        <taxon>Pezizomycotina</taxon>
        <taxon>Eurotiomycetes</taxon>
        <taxon>Eurotiomycetidae</taxon>
        <taxon>Eurotiales</taxon>
        <taxon>Aspergillaceae</taxon>
        <taxon>Aspergillus</taxon>
        <taxon>Aspergillus subgen. Fumigati</taxon>
    </lineage>
</organism>
<proteinExistence type="inferred from homology"/>
<protein>
    <recommendedName>
        <fullName>Polyadenylate-binding protein, cytoplasmic and nuclear</fullName>
        <shortName>PABP</shortName>
        <shortName>Poly(A)-binding protein</shortName>
    </recommendedName>
    <alternativeName>
        <fullName>Polyadenylate tail-binding protein</fullName>
    </alternativeName>
</protein>
<accession>A1D4K4</accession>
<gene>
    <name type="primary">pab1</name>
    <name type="ORF">NFIA_020550</name>
</gene>
<feature type="chain" id="PRO_0000295395" description="Polyadenylate-binding protein, cytoplasmic and nuclear">
    <location>
        <begin position="1"/>
        <end position="751"/>
    </location>
</feature>
<feature type="domain" description="RRM 1" evidence="2">
    <location>
        <begin position="52"/>
        <end position="130"/>
    </location>
</feature>
<feature type="domain" description="RRM 2" evidence="2">
    <location>
        <begin position="140"/>
        <end position="217"/>
    </location>
</feature>
<feature type="domain" description="RRM 3" evidence="2">
    <location>
        <begin position="233"/>
        <end position="310"/>
    </location>
</feature>
<feature type="domain" description="RRM 4" evidence="2">
    <location>
        <begin position="336"/>
        <end position="458"/>
    </location>
</feature>
<feature type="domain" description="PABC" evidence="3">
    <location>
        <begin position="646"/>
        <end position="723"/>
    </location>
</feature>
<feature type="region of interest" description="Disordered" evidence="4">
    <location>
        <begin position="1"/>
        <end position="50"/>
    </location>
</feature>
<feature type="region of interest" description="Disordered" evidence="4">
    <location>
        <begin position="371"/>
        <end position="413"/>
    </location>
</feature>
<feature type="region of interest" description="Disordered" evidence="4">
    <location>
        <begin position="601"/>
        <end position="643"/>
    </location>
</feature>
<feature type="region of interest" description="Disordered" evidence="4">
    <location>
        <begin position="725"/>
        <end position="751"/>
    </location>
</feature>
<feature type="compositionally biased region" description="Polar residues" evidence="4">
    <location>
        <begin position="1"/>
        <end position="26"/>
    </location>
</feature>
<feature type="compositionally biased region" description="Polar residues" evidence="4">
    <location>
        <begin position="36"/>
        <end position="50"/>
    </location>
</feature>
<feature type="compositionally biased region" description="Basic and acidic residues" evidence="4">
    <location>
        <begin position="379"/>
        <end position="413"/>
    </location>
</feature>
<feature type="compositionally biased region" description="Gly residues" evidence="4">
    <location>
        <begin position="603"/>
        <end position="629"/>
    </location>
</feature>
<feature type="compositionally biased region" description="Basic and acidic residues" evidence="4">
    <location>
        <begin position="735"/>
        <end position="751"/>
    </location>
</feature>
<comment type="function">
    <text evidence="1">Binds the poly(A) tail of mRNA. Appears to be an important mediator of the multiple roles of the poly(A) tail in mRNA biogenesis, stability and translation. In the nucleus, involved in both mRNA cleavage and polyadenylation. Is also required for efficient mRNA export to the cytoplasm. Acts in concert with a poly(A)-specific nuclease (PAN) to affect poly(A) tail shortening, which may occur concomitantly with either nucleocytoplasmic mRNA transport or translational initiation. In the cytoplasm, stimulates translation initiation and regulates mRNA decay through translation termination-coupled poly(A) shortening, probably mediated by PAN (By similarity).</text>
</comment>
<comment type="subcellular location">
    <subcellularLocation>
        <location evidence="1">Cytoplasm</location>
    </subcellularLocation>
    <subcellularLocation>
        <location evidence="1">Nucleus</location>
    </subcellularLocation>
</comment>
<comment type="similarity">
    <text evidence="5">Belongs to the polyadenylate-binding protein type-1 family.</text>
</comment>
<dbReference type="EMBL" id="DS027688">
    <property type="protein sequence ID" value="EAW23347.1"/>
    <property type="molecule type" value="Genomic_DNA"/>
</dbReference>
<dbReference type="RefSeq" id="XP_001265244.1">
    <property type="nucleotide sequence ID" value="XM_001265243.1"/>
</dbReference>
<dbReference type="SMR" id="A1D4K4"/>
<dbReference type="STRING" id="331117.A1D4K4"/>
<dbReference type="EnsemblFungi" id="EAW23347">
    <property type="protein sequence ID" value="EAW23347"/>
    <property type="gene ID" value="NFIA_020550"/>
</dbReference>
<dbReference type="GeneID" id="4591237"/>
<dbReference type="KEGG" id="nfi:NFIA_020550"/>
<dbReference type="VEuPathDB" id="FungiDB:NFIA_020550"/>
<dbReference type="eggNOG" id="KOG0123">
    <property type="taxonomic scope" value="Eukaryota"/>
</dbReference>
<dbReference type="HOGENOM" id="CLU_012062_22_4_1"/>
<dbReference type="OMA" id="QQPGFMP"/>
<dbReference type="OrthoDB" id="19742at2759"/>
<dbReference type="Proteomes" id="UP000006702">
    <property type="component" value="Unassembled WGS sequence"/>
</dbReference>
<dbReference type="GO" id="GO:0005737">
    <property type="term" value="C:cytoplasm"/>
    <property type="evidence" value="ECO:0007669"/>
    <property type="project" value="UniProtKB-SubCell"/>
</dbReference>
<dbReference type="GO" id="GO:0005634">
    <property type="term" value="C:nucleus"/>
    <property type="evidence" value="ECO:0007669"/>
    <property type="project" value="UniProtKB-SubCell"/>
</dbReference>
<dbReference type="GO" id="GO:0003723">
    <property type="term" value="F:RNA binding"/>
    <property type="evidence" value="ECO:0007669"/>
    <property type="project" value="UniProtKB-KW"/>
</dbReference>
<dbReference type="GO" id="GO:0006397">
    <property type="term" value="P:mRNA processing"/>
    <property type="evidence" value="ECO:0007669"/>
    <property type="project" value="UniProtKB-KW"/>
</dbReference>
<dbReference type="GO" id="GO:0051028">
    <property type="term" value="P:mRNA transport"/>
    <property type="evidence" value="ECO:0007669"/>
    <property type="project" value="UniProtKB-KW"/>
</dbReference>
<dbReference type="GO" id="GO:0006417">
    <property type="term" value="P:regulation of translation"/>
    <property type="evidence" value="ECO:0007669"/>
    <property type="project" value="UniProtKB-KW"/>
</dbReference>
<dbReference type="CDD" id="cd12378">
    <property type="entry name" value="RRM1_I_PABPs"/>
    <property type="match status" value="1"/>
</dbReference>
<dbReference type="CDD" id="cd12379">
    <property type="entry name" value="RRM2_I_PABPs"/>
    <property type="match status" value="1"/>
</dbReference>
<dbReference type="CDD" id="cd12380">
    <property type="entry name" value="RRM3_I_PABPs"/>
    <property type="match status" value="1"/>
</dbReference>
<dbReference type="CDD" id="cd12381">
    <property type="entry name" value="RRM4_I_PABPs"/>
    <property type="match status" value="1"/>
</dbReference>
<dbReference type="FunFam" id="1.10.1900.10:FF:000004">
    <property type="entry name" value="Polyadenylate-binding protein"/>
    <property type="match status" value="1"/>
</dbReference>
<dbReference type="FunFam" id="3.30.70.330:FF:000003">
    <property type="entry name" value="Polyadenylate-binding protein"/>
    <property type="match status" value="1"/>
</dbReference>
<dbReference type="FunFam" id="3.30.70.330:FF:000355">
    <property type="entry name" value="Polyadenylate-binding protein"/>
    <property type="match status" value="1"/>
</dbReference>
<dbReference type="FunFam" id="3.30.70.330:FF:000384">
    <property type="entry name" value="Polyadenylate-binding protein"/>
    <property type="match status" value="1"/>
</dbReference>
<dbReference type="Gene3D" id="3.30.70.330">
    <property type="match status" value="4"/>
</dbReference>
<dbReference type="Gene3D" id="1.10.1900.10">
    <property type="entry name" value="c-terminal domain of poly(a) binding protein"/>
    <property type="match status" value="1"/>
</dbReference>
<dbReference type="InterPro" id="IPR012677">
    <property type="entry name" value="Nucleotide-bd_a/b_plait_sf"/>
</dbReference>
<dbReference type="InterPro" id="IPR036053">
    <property type="entry name" value="PABP-dom"/>
</dbReference>
<dbReference type="InterPro" id="IPR006515">
    <property type="entry name" value="PABP_1234"/>
</dbReference>
<dbReference type="InterPro" id="IPR002004">
    <property type="entry name" value="PABP_HYD_C"/>
</dbReference>
<dbReference type="InterPro" id="IPR034364">
    <property type="entry name" value="PABP_RRM1"/>
</dbReference>
<dbReference type="InterPro" id="IPR035979">
    <property type="entry name" value="RBD_domain_sf"/>
</dbReference>
<dbReference type="InterPro" id="IPR045305">
    <property type="entry name" value="RRM2_I_PABPs"/>
</dbReference>
<dbReference type="InterPro" id="IPR000504">
    <property type="entry name" value="RRM_dom"/>
</dbReference>
<dbReference type="InterPro" id="IPR003954">
    <property type="entry name" value="RRM_dom_euk"/>
</dbReference>
<dbReference type="NCBIfam" id="TIGR01628">
    <property type="entry name" value="PABP-1234"/>
    <property type="match status" value="1"/>
</dbReference>
<dbReference type="PANTHER" id="PTHR24012">
    <property type="entry name" value="RNA BINDING PROTEIN"/>
    <property type="match status" value="1"/>
</dbReference>
<dbReference type="Pfam" id="PF00658">
    <property type="entry name" value="MLLE"/>
    <property type="match status" value="1"/>
</dbReference>
<dbReference type="Pfam" id="PF00076">
    <property type="entry name" value="RRM_1"/>
    <property type="match status" value="5"/>
</dbReference>
<dbReference type="SMART" id="SM00517">
    <property type="entry name" value="PolyA"/>
    <property type="match status" value="1"/>
</dbReference>
<dbReference type="SMART" id="SM00360">
    <property type="entry name" value="RRM"/>
    <property type="match status" value="4"/>
</dbReference>
<dbReference type="SMART" id="SM00361">
    <property type="entry name" value="RRM_1"/>
    <property type="match status" value="4"/>
</dbReference>
<dbReference type="SUPFAM" id="SSF63570">
    <property type="entry name" value="PABC (PABP) domain"/>
    <property type="match status" value="1"/>
</dbReference>
<dbReference type="SUPFAM" id="SSF54928">
    <property type="entry name" value="RNA-binding domain, RBD"/>
    <property type="match status" value="3"/>
</dbReference>
<dbReference type="PROSITE" id="PS51309">
    <property type="entry name" value="PABC"/>
    <property type="match status" value="1"/>
</dbReference>
<dbReference type="PROSITE" id="PS50102">
    <property type="entry name" value="RRM"/>
    <property type="match status" value="4"/>
</dbReference>
<reference key="1">
    <citation type="journal article" date="2008" name="PLoS Genet.">
        <title>Genomic islands in the pathogenic filamentous fungus Aspergillus fumigatus.</title>
        <authorList>
            <person name="Fedorova N.D."/>
            <person name="Khaldi N."/>
            <person name="Joardar V.S."/>
            <person name="Maiti R."/>
            <person name="Amedeo P."/>
            <person name="Anderson M.J."/>
            <person name="Crabtree J."/>
            <person name="Silva J.C."/>
            <person name="Badger J.H."/>
            <person name="Albarraq A."/>
            <person name="Angiuoli S."/>
            <person name="Bussey H."/>
            <person name="Bowyer P."/>
            <person name="Cotty P.J."/>
            <person name="Dyer P.S."/>
            <person name="Egan A."/>
            <person name="Galens K."/>
            <person name="Fraser-Liggett C.M."/>
            <person name="Haas B.J."/>
            <person name="Inman J.M."/>
            <person name="Kent R."/>
            <person name="Lemieux S."/>
            <person name="Malavazi I."/>
            <person name="Orvis J."/>
            <person name="Roemer T."/>
            <person name="Ronning C.M."/>
            <person name="Sundaram J.P."/>
            <person name="Sutton G."/>
            <person name="Turner G."/>
            <person name="Venter J.C."/>
            <person name="White O.R."/>
            <person name="Whitty B.R."/>
            <person name="Youngman P."/>
            <person name="Wolfe K.H."/>
            <person name="Goldman G.H."/>
            <person name="Wortman J.R."/>
            <person name="Jiang B."/>
            <person name="Denning D.W."/>
            <person name="Nierman W.C."/>
        </authorList>
    </citation>
    <scope>NUCLEOTIDE SEQUENCE [LARGE SCALE GENOMIC DNA]</scope>
    <source>
        <strain>ATCC 1020 / DSM 3700 / CBS 544.65 / FGSC A1164 / JCM 1740 / NRRL 181 / WB 181</strain>
    </source>
</reference>